<organism>
    <name type="scientific">Streptococcus pneumoniae (strain ATCC 700669 / Spain 23F-1)</name>
    <dbReference type="NCBI Taxonomy" id="561276"/>
    <lineage>
        <taxon>Bacteria</taxon>
        <taxon>Bacillati</taxon>
        <taxon>Bacillota</taxon>
        <taxon>Bacilli</taxon>
        <taxon>Lactobacillales</taxon>
        <taxon>Streptococcaceae</taxon>
        <taxon>Streptococcus</taxon>
    </lineage>
</organism>
<evidence type="ECO:0000255" key="1">
    <source>
        <dbReference type="HAMAP-Rule" id="MF_00123"/>
    </source>
</evidence>
<keyword id="KW-0030">Aminoacyl-tRNA synthetase</keyword>
<keyword id="KW-0067">ATP-binding</keyword>
<keyword id="KW-0963">Cytoplasm</keyword>
<keyword id="KW-0436">Ligase</keyword>
<keyword id="KW-0547">Nucleotide-binding</keyword>
<keyword id="KW-0648">Protein biosynthesis</keyword>
<feature type="chain" id="PRO_1000198935" description="Arginine--tRNA ligase">
    <location>
        <begin position="1"/>
        <end position="563"/>
    </location>
</feature>
<feature type="short sequence motif" description="'HIGH' region">
    <location>
        <begin position="121"/>
        <end position="131"/>
    </location>
</feature>
<reference key="1">
    <citation type="journal article" date="2009" name="J. Bacteriol.">
        <title>Role of conjugative elements in the evolution of the multidrug-resistant pandemic clone Streptococcus pneumoniae Spain23F ST81.</title>
        <authorList>
            <person name="Croucher N.J."/>
            <person name="Walker D."/>
            <person name="Romero P."/>
            <person name="Lennard N."/>
            <person name="Paterson G.K."/>
            <person name="Bason N.C."/>
            <person name="Mitchell A.M."/>
            <person name="Quail M.A."/>
            <person name="Andrew P.W."/>
            <person name="Parkhill J."/>
            <person name="Bentley S.D."/>
            <person name="Mitchell T.J."/>
        </authorList>
    </citation>
    <scope>NUCLEOTIDE SEQUENCE [LARGE SCALE GENOMIC DNA]</scope>
    <source>
        <strain>ATCC 700669 / Spain 23F-1</strain>
    </source>
</reference>
<comment type="catalytic activity">
    <reaction evidence="1">
        <text>tRNA(Arg) + L-arginine + ATP = L-arginyl-tRNA(Arg) + AMP + diphosphate</text>
        <dbReference type="Rhea" id="RHEA:20301"/>
        <dbReference type="Rhea" id="RHEA-COMP:9658"/>
        <dbReference type="Rhea" id="RHEA-COMP:9673"/>
        <dbReference type="ChEBI" id="CHEBI:30616"/>
        <dbReference type="ChEBI" id="CHEBI:32682"/>
        <dbReference type="ChEBI" id="CHEBI:33019"/>
        <dbReference type="ChEBI" id="CHEBI:78442"/>
        <dbReference type="ChEBI" id="CHEBI:78513"/>
        <dbReference type="ChEBI" id="CHEBI:456215"/>
        <dbReference type="EC" id="6.1.1.19"/>
    </reaction>
</comment>
<comment type="subunit">
    <text evidence="1">Monomer.</text>
</comment>
<comment type="subcellular location">
    <subcellularLocation>
        <location evidence="1">Cytoplasm</location>
    </subcellularLocation>
</comment>
<comment type="similarity">
    <text evidence="1">Belongs to the class-I aminoacyl-tRNA synthetase family.</text>
</comment>
<sequence>MNTKELIASELSSIIDSLDQEAILKLLETPKNSEMGDIAFPAFSLAKVERKAPQMIAAELAEKMNSQAFEKVVATGPYVNFFLDKSAISAQVLQAVTTEKEHYADQNIGKQENVVIDMSSPNIAKPFSIGHLRSTVIGDSLSHIFQKIGYQTVKVNHLGDWGKQFGMLIVAYKKWGDEEAVKAHPIDELLKLYVRINAEAENDPSLDEEAREWFRKLENGDEEALALWQWFRDESLVEFNRLYNELKVEFDSYNGEAFYNDKMDAVVDILSEKGLLLESEGAQVVNLEKYGIEHPALIKKSDGATLYITRDLAAALYRKNEYQFAKSIYVVGQEQSAHFKQLKAVLQEMGYDWSDDITHVPFGLVTKEGKKLSTRKGNVILLEPTVAEAVSRAKVQIEAKNPELENKDQVAHAVGVGAIKFYDLKTDRTNGYDFDLEAMVSFEGETGPYVQYAYARIQSILRKADFKPETAGNYSLNDTESWEIIKLIQDFPRIINRAADNFEPSIIAKFAISLAQSFNKYYAHTRILDESPERDSRLALSYATAVVLKEALRLLGVEAPEKM</sequence>
<dbReference type="EC" id="6.1.1.19" evidence="1"/>
<dbReference type="EMBL" id="FM211187">
    <property type="protein sequence ID" value="CAR69843.1"/>
    <property type="molecule type" value="Genomic_DNA"/>
</dbReference>
<dbReference type="RefSeq" id="WP_001092739.1">
    <property type="nucleotide sequence ID" value="NC_011900.1"/>
</dbReference>
<dbReference type="SMR" id="B8ZPK2"/>
<dbReference type="KEGG" id="sne:SPN23F21030"/>
<dbReference type="HOGENOM" id="CLU_006406_6_1_9"/>
<dbReference type="GO" id="GO:0005737">
    <property type="term" value="C:cytoplasm"/>
    <property type="evidence" value="ECO:0007669"/>
    <property type="project" value="UniProtKB-SubCell"/>
</dbReference>
<dbReference type="GO" id="GO:0004814">
    <property type="term" value="F:arginine-tRNA ligase activity"/>
    <property type="evidence" value="ECO:0007669"/>
    <property type="project" value="UniProtKB-UniRule"/>
</dbReference>
<dbReference type="GO" id="GO:0005524">
    <property type="term" value="F:ATP binding"/>
    <property type="evidence" value="ECO:0007669"/>
    <property type="project" value="UniProtKB-UniRule"/>
</dbReference>
<dbReference type="GO" id="GO:0006420">
    <property type="term" value="P:arginyl-tRNA aminoacylation"/>
    <property type="evidence" value="ECO:0007669"/>
    <property type="project" value="UniProtKB-UniRule"/>
</dbReference>
<dbReference type="CDD" id="cd07956">
    <property type="entry name" value="Anticodon_Ia_Arg"/>
    <property type="match status" value="1"/>
</dbReference>
<dbReference type="CDD" id="cd00671">
    <property type="entry name" value="ArgRS_core"/>
    <property type="match status" value="1"/>
</dbReference>
<dbReference type="FunFam" id="1.10.730.10:FF:000034">
    <property type="entry name" value="Arginine--tRNA ligase"/>
    <property type="match status" value="1"/>
</dbReference>
<dbReference type="FunFam" id="3.30.1360.70:FF:000005">
    <property type="entry name" value="Arginine--tRNA ligase"/>
    <property type="match status" value="1"/>
</dbReference>
<dbReference type="FunFam" id="3.40.50.620:FF:000116">
    <property type="entry name" value="Arginine--tRNA ligase"/>
    <property type="match status" value="1"/>
</dbReference>
<dbReference type="Gene3D" id="3.30.1360.70">
    <property type="entry name" value="Arginyl tRNA synthetase N-terminal domain"/>
    <property type="match status" value="1"/>
</dbReference>
<dbReference type="Gene3D" id="3.40.50.620">
    <property type="entry name" value="HUPs"/>
    <property type="match status" value="1"/>
</dbReference>
<dbReference type="Gene3D" id="1.10.730.10">
    <property type="entry name" value="Isoleucyl-tRNA Synthetase, Domain 1"/>
    <property type="match status" value="1"/>
</dbReference>
<dbReference type="HAMAP" id="MF_00123">
    <property type="entry name" value="Arg_tRNA_synth"/>
    <property type="match status" value="1"/>
</dbReference>
<dbReference type="InterPro" id="IPR001278">
    <property type="entry name" value="Arg-tRNA-ligase"/>
</dbReference>
<dbReference type="InterPro" id="IPR005148">
    <property type="entry name" value="Arg-tRNA-synth_N"/>
</dbReference>
<dbReference type="InterPro" id="IPR036695">
    <property type="entry name" value="Arg-tRNA-synth_N_sf"/>
</dbReference>
<dbReference type="InterPro" id="IPR035684">
    <property type="entry name" value="ArgRS_core"/>
</dbReference>
<dbReference type="InterPro" id="IPR008909">
    <property type="entry name" value="DALR_anticod-bd"/>
</dbReference>
<dbReference type="InterPro" id="IPR014729">
    <property type="entry name" value="Rossmann-like_a/b/a_fold"/>
</dbReference>
<dbReference type="InterPro" id="IPR009080">
    <property type="entry name" value="tRNAsynth_Ia_anticodon-bd"/>
</dbReference>
<dbReference type="NCBIfam" id="TIGR00456">
    <property type="entry name" value="argS"/>
    <property type="match status" value="1"/>
</dbReference>
<dbReference type="PANTHER" id="PTHR11956:SF5">
    <property type="entry name" value="ARGININE--TRNA LIGASE, CYTOPLASMIC"/>
    <property type="match status" value="1"/>
</dbReference>
<dbReference type="PANTHER" id="PTHR11956">
    <property type="entry name" value="ARGINYL-TRNA SYNTHETASE"/>
    <property type="match status" value="1"/>
</dbReference>
<dbReference type="Pfam" id="PF03485">
    <property type="entry name" value="Arg_tRNA_synt_N"/>
    <property type="match status" value="1"/>
</dbReference>
<dbReference type="Pfam" id="PF05746">
    <property type="entry name" value="DALR_1"/>
    <property type="match status" value="1"/>
</dbReference>
<dbReference type="Pfam" id="PF00750">
    <property type="entry name" value="tRNA-synt_1d"/>
    <property type="match status" value="1"/>
</dbReference>
<dbReference type="PRINTS" id="PR01038">
    <property type="entry name" value="TRNASYNTHARG"/>
</dbReference>
<dbReference type="SMART" id="SM01016">
    <property type="entry name" value="Arg_tRNA_synt_N"/>
    <property type="match status" value="1"/>
</dbReference>
<dbReference type="SMART" id="SM00836">
    <property type="entry name" value="DALR_1"/>
    <property type="match status" value="1"/>
</dbReference>
<dbReference type="SUPFAM" id="SSF47323">
    <property type="entry name" value="Anticodon-binding domain of a subclass of class I aminoacyl-tRNA synthetases"/>
    <property type="match status" value="1"/>
</dbReference>
<dbReference type="SUPFAM" id="SSF55190">
    <property type="entry name" value="Arginyl-tRNA synthetase (ArgRS), N-terminal 'additional' domain"/>
    <property type="match status" value="1"/>
</dbReference>
<dbReference type="SUPFAM" id="SSF52374">
    <property type="entry name" value="Nucleotidylyl transferase"/>
    <property type="match status" value="1"/>
</dbReference>
<name>SYR_STRPJ</name>
<proteinExistence type="inferred from homology"/>
<gene>
    <name evidence="1" type="primary">argS</name>
    <name type="ordered locus">SPN23F21030</name>
</gene>
<protein>
    <recommendedName>
        <fullName evidence="1">Arginine--tRNA ligase</fullName>
        <ecNumber evidence="1">6.1.1.19</ecNumber>
    </recommendedName>
    <alternativeName>
        <fullName evidence="1">Arginyl-tRNA synthetase</fullName>
        <shortName evidence="1">ArgRS</shortName>
    </alternativeName>
</protein>
<accession>B8ZPK2</accession>